<accession>O62695</accession>
<keyword id="KW-0007">Acetylation</keyword>
<keyword id="KW-0158">Chromosome</keyword>
<keyword id="KW-0238">DNA-binding</keyword>
<keyword id="KW-0544">Nucleosome core</keyword>
<keyword id="KW-0539">Nucleus</keyword>
<keyword id="KW-1185">Reference proteome</keyword>
<keyword id="KW-0832">Ubl conjugation</keyword>
<proteinExistence type="evidence at transcript level"/>
<sequence>MAGGKAGKDSGKAKAKAVSRSQRAGLQFPVGRIHRHLKTRTTSHGRVGATAAVYSAAILEYLTAEVLELAGNASKDLKVKRITPRHLQLAIRGDEELDSLIKATIAGGGAIPHIHKSLIGKKGQQKTA</sequence>
<dbReference type="EMBL" id="AF030235">
    <property type="protein sequence ID" value="AAC39253.1"/>
    <property type="status" value="ALT_SEQ"/>
    <property type="molecule type" value="mRNA"/>
</dbReference>
<dbReference type="PIR" id="JE0093">
    <property type="entry name" value="JE0093"/>
</dbReference>
<dbReference type="RefSeq" id="NP_001164412.1">
    <property type="nucleotide sequence ID" value="NM_001170941.1"/>
</dbReference>
<dbReference type="SMR" id="O62695"/>
<dbReference type="FunCoup" id="O62695">
    <property type="interactions" value="1876"/>
</dbReference>
<dbReference type="STRING" id="9986.ENSOCUP00000007030"/>
<dbReference type="PaxDb" id="9986-ENSOCUP00000007030"/>
<dbReference type="GeneID" id="100328558"/>
<dbReference type="KEGG" id="ocu:100328558"/>
<dbReference type="CTD" id="94239"/>
<dbReference type="eggNOG" id="KOG1757">
    <property type="taxonomic scope" value="Eukaryota"/>
</dbReference>
<dbReference type="InParanoid" id="O62695"/>
<dbReference type="OrthoDB" id="9421954at2759"/>
<dbReference type="Proteomes" id="UP000001811">
    <property type="component" value="Unplaced"/>
</dbReference>
<dbReference type="GO" id="GO:0000786">
    <property type="term" value="C:nucleosome"/>
    <property type="evidence" value="ECO:0007669"/>
    <property type="project" value="UniProtKB-KW"/>
</dbReference>
<dbReference type="GO" id="GO:0005634">
    <property type="term" value="C:nucleus"/>
    <property type="evidence" value="ECO:0007669"/>
    <property type="project" value="UniProtKB-SubCell"/>
</dbReference>
<dbReference type="GO" id="GO:0003677">
    <property type="term" value="F:DNA binding"/>
    <property type="evidence" value="ECO:0007669"/>
    <property type="project" value="UniProtKB-KW"/>
</dbReference>
<dbReference type="GO" id="GO:0046982">
    <property type="term" value="F:protein heterodimerization activity"/>
    <property type="evidence" value="ECO:0007669"/>
    <property type="project" value="InterPro"/>
</dbReference>
<dbReference type="GO" id="GO:0030527">
    <property type="term" value="F:structural constituent of chromatin"/>
    <property type="evidence" value="ECO:0007669"/>
    <property type="project" value="InterPro"/>
</dbReference>
<dbReference type="CDD" id="cd00074">
    <property type="entry name" value="HFD_H2A"/>
    <property type="match status" value="1"/>
</dbReference>
<dbReference type="FunFam" id="1.10.20.10:FF:000005">
    <property type="entry name" value="Histone H2A"/>
    <property type="match status" value="1"/>
</dbReference>
<dbReference type="Gene3D" id="1.10.20.10">
    <property type="entry name" value="Histone, subunit A"/>
    <property type="match status" value="1"/>
</dbReference>
<dbReference type="InterPro" id="IPR009072">
    <property type="entry name" value="Histone-fold"/>
</dbReference>
<dbReference type="InterPro" id="IPR002119">
    <property type="entry name" value="Histone_H2A"/>
</dbReference>
<dbReference type="InterPro" id="IPR007125">
    <property type="entry name" value="Histone_H2A/H2B/H3"/>
</dbReference>
<dbReference type="InterPro" id="IPR032454">
    <property type="entry name" value="Histone_H2A_C"/>
</dbReference>
<dbReference type="InterPro" id="IPR032458">
    <property type="entry name" value="Histone_H2A_CS"/>
</dbReference>
<dbReference type="PANTHER" id="PTHR23430">
    <property type="entry name" value="HISTONE H2A"/>
    <property type="match status" value="1"/>
</dbReference>
<dbReference type="Pfam" id="PF00125">
    <property type="entry name" value="Histone"/>
    <property type="match status" value="1"/>
</dbReference>
<dbReference type="Pfam" id="PF16211">
    <property type="entry name" value="Histone_H2A_C"/>
    <property type="match status" value="1"/>
</dbReference>
<dbReference type="PRINTS" id="PR00620">
    <property type="entry name" value="HISTONEH2A"/>
</dbReference>
<dbReference type="SMART" id="SM00414">
    <property type="entry name" value="H2A"/>
    <property type="match status" value="1"/>
</dbReference>
<dbReference type="SUPFAM" id="SSF47113">
    <property type="entry name" value="Histone-fold"/>
    <property type="match status" value="1"/>
</dbReference>
<dbReference type="PROSITE" id="PS00046">
    <property type="entry name" value="HISTONE_H2A"/>
    <property type="match status" value="1"/>
</dbReference>
<protein>
    <recommendedName>
        <fullName>Histone H2A.V</fullName>
    </recommendedName>
    <alternativeName>
        <fullName>H2A.F/Z</fullName>
    </alternativeName>
</protein>
<evidence type="ECO:0000250" key="1"/>
<evidence type="ECO:0000250" key="2">
    <source>
        <dbReference type="UniProtKB" id="P0C0S5"/>
    </source>
</evidence>
<evidence type="ECO:0000250" key="3">
    <source>
        <dbReference type="UniProtKB" id="Q3THW5"/>
    </source>
</evidence>
<evidence type="ECO:0000250" key="4">
    <source>
        <dbReference type="UniProtKB" id="Q71UI9"/>
    </source>
</evidence>
<evidence type="ECO:0000256" key="5">
    <source>
        <dbReference type="SAM" id="MobiDB-lite"/>
    </source>
</evidence>
<evidence type="ECO:0000305" key="6"/>
<name>H2AV_RABIT</name>
<reference key="1">
    <citation type="journal article" date="1998" name="Biochem. Biophys. Res. Commun.">
        <title>Histone H2A.F/Z subfamily: the smallest member and the signature sequence.</title>
        <authorList>
            <person name="Jiang W."/>
            <person name="Guo X."/>
            <person name="Bhavanandan V.P."/>
        </authorList>
    </citation>
    <scope>NUCLEOTIDE SEQUENCE [MRNA]</scope>
    <source>
        <strain>New England white</strain>
        <tissue>Urinary bladder</tissue>
    </source>
</reference>
<organism>
    <name type="scientific">Oryctolagus cuniculus</name>
    <name type="common">Rabbit</name>
    <dbReference type="NCBI Taxonomy" id="9986"/>
    <lineage>
        <taxon>Eukaryota</taxon>
        <taxon>Metazoa</taxon>
        <taxon>Chordata</taxon>
        <taxon>Craniata</taxon>
        <taxon>Vertebrata</taxon>
        <taxon>Euteleostomi</taxon>
        <taxon>Mammalia</taxon>
        <taxon>Eutheria</taxon>
        <taxon>Euarchontoglires</taxon>
        <taxon>Glires</taxon>
        <taxon>Lagomorpha</taxon>
        <taxon>Leporidae</taxon>
        <taxon>Oryctolagus</taxon>
    </lineage>
</organism>
<comment type="function">
    <text evidence="1">Variant histone H2A which replaces conventional H2A in a subset of nucleosomes. Nucleosomes wrap and compact DNA into chromatin, limiting DNA accessibility to the cellular machineries which require DNA as a template. Histones thereby play a central role in transcription regulation, DNA repair, DNA replication and chromosomal stability. DNA accessibility is regulated via a complex set of post-translational modifications of histones, also called histone code, and nucleosome remodeling. May be involved in the formation of constitutive heterochromatin. May be required for chromosome segregation during cell division (By similarity).</text>
</comment>
<comment type="subunit">
    <text evidence="1">The nucleosome is a histone octamer containing two molecules each of H2A, H2B, H3 and H4 assembled in one H3-H4 heterotetramer and two H2A-H2B heterodimers. The octamer wraps approximately 147 bp of DNA. H2A or its variant H2AZ2 forms a heterodimer with H2B (By similarity).</text>
</comment>
<comment type="subcellular location">
    <subcellularLocation>
        <location evidence="1">Nucleus</location>
    </subcellularLocation>
    <subcellularLocation>
        <location evidence="1">Chromosome</location>
    </subcellularLocation>
</comment>
<comment type="PTM">
    <text evidence="1">Monoubiquitination of Lys-122 gives a specific tag for epigenetic transcriptional repression.</text>
</comment>
<comment type="PTM">
    <text evidence="1">Acetylated on Lys-5, Lys-8 and Lys-12 during interphase. Acetylation disappears at mitosis (By similarity).</text>
</comment>
<comment type="similarity">
    <text evidence="6">Belongs to the histone H2A family.</text>
</comment>
<comment type="sequence caution" evidence="6">
    <conflict type="erroneous termination">
        <sequence resource="EMBL-CDS" id="AAC39253"/>
    </conflict>
    <text>Truncated C-terminus.</text>
</comment>
<gene>
    <name evidence="4" type="primary">H2AZ2</name>
    <name type="synonym">H2AV</name>
</gene>
<feature type="initiator methionine" description="Removed" evidence="6">
    <location>
        <position position="1"/>
    </location>
</feature>
<feature type="chain" id="PRO_0000239070" description="Histone H2A.V">
    <location>
        <begin position="2"/>
        <end position="128"/>
    </location>
</feature>
<feature type="region of interest" description="Disordered" evidence="5">
    <location>
        <begin position="1"/>
        <end position="23"/>
    </location>
</feature>
<feature type="compositionally biased region" description="Basic and acidic residues" evidence="5">
    <location>
        <begin position="1"/>
        <end position="12"/>
    </location>
</feature>
<feature type="modified residue" description="N6-acetyllysine" evidence="3">
    <location>
        <position position="5"/>
    </location>
</feature>
<feature type="modified residue" description="N6-acetyllysine" evidence="3">
    <location>
        <position position="8"/>
    </location>
</feature>
<feature type="modified residue" description="N6-acetyllysine" evidence="3">
    <location>
        <position position="12"/>
    </location>
</feature>
<feature type="modified residue" description="N6-lactoyllysine; alternate" evidence="2">
    <location>
        <position position="12"/>
    </location>
</feature>
<feature type="modified residue" description="N6-lactoyllysine; alternate" evidence="2">
    <location>
        <position position="14"/>
    </location>
</feature>
<feature type="modified residue" description="N6-lactoyllysine" evidence="2">
    <location>
        <position position="116"/>
    </location>
</feature>